<proteinExistence type="evidence at transcript level"/>
<gene>
    <name evidence="9" type="primary">cut1</name>
    <name type="ORF">AN5309</name>
</gene>
<dbReference type="EC" id="3.1.1.74" evidence="5 6"/>
<dbReference type="EMBL" id="AACD01000093">
    <property type="protein sequence ID" value="EAA62469.1"/>
    <property type="molecule type" value="Genomic_DNA"/>
</dbReference>
<dbReference type="EMBL" id="BN001305">
    <property type="protein sequence ID" value="CBF82125.1"/>
    <property type="molecule type" value="Genomic_DNA"/>
</dbReference>
<dbReference type="RefSeq" id="XP_662913.1">
    <property type="nucleotide sequence ID" value="XM_657821.1"/>
</dbReference>
<dbReference type="SMR" id="Q5B2C1"/>
<dbReference type="ESTHER" id="emeni-q5b2c1">
    <property type="family name" value="Cutinase"/>
</dbReference>
<dbReference type="EnsemblFungi" id="CBF82125">
    <property type="protein sequence ID" value="CBF82125"/>
    <property type="gene ID" value="ANIA_05309"/>
</dbReference>
<dbReference type="KEGG" id="ani:ANIA_05309"/>
<dbReference type="VEuPathDB" id="FungiDB:AN5309"/>
<dbReference type="eggNOG" id="ENOG502SI38">
    <property type="taxonomic scope" value="Eukaryota"/>
</dbReference>
<dbReference type="HOGENOM" id="CLU_040058_2_0_1"/>
<dbReference type="InParanoid" id="Q5B2C1"/>
<dbReference type="OMA" id="CEPITFI"/>
<dbReference type="OrthoDB" id="3225429at2759"/>
<dbReference type="Proteomes" id="UP000000560">
    <property type="component" value="Chromosome V"/>
</dbReference>
<dbReference type="GO" id="GO:0005576">
    <property type="term" value="C:extracellular region"/>
    <property type="evidence" value="ECO:0007669"/>
    <property type="project" value="UniProtKB-SubCell"/>
</dbReference>
<dbReference type="GO" id="GO:0050525">
    <property type="term" value="F:cutinase activity"/>
    <property type="evidence" value="ECO:0000250"/>
    <property type="project" value="UniProtKB"/>
</dbReference>
<dbReference type="GO" id="GO:0016052">
    <property type="term" value="P:carbohydrate catabolic process"/>
    <property type="evidence" value="ECO:0000318"/>
    <property type="project" value="GO_Central"/>
</dbReference>
<dbReference type="FunFam" id="3.40.50.1820:FF:000235">
    <property type="entry name" value="Cutinase 1"/>
    <property type="match status" value="1"/>
</dbReference>
<dbReference type="Gene3D" id="3.40.50.1820">
    <property type="entry name" value="alpha/beta hydrolase"/>
    <property type="match status" value="1"/>
</dbReference>
<dbReference type="InterPro" id="IPR029058">
    <property type="entry name" value="AB_hydrolase_fold"/>
</dbReference>
<dbReference type="InterPro" id="IPR000675">
    <property type="entry name" value="Cutinase/axe"/>
</dbReference>
<dbReference type="InterPro" id="IPR043580">
    <property type="entry name" value="CUTINASE_1"/>
</dbReference>
<dbReference type="InterPro" id="IPR043579">
    <property type="entry name" value="CUTINASE_2"/>
</dbReference>
<dbReference type="InterPro" id="IPR011150">
    <property type="entry name" value="Cutinase_monf"/>
</dbReference>
<dbReference type="PANTHER" id="PTHR48250:SF3">
    <property type="entry name" value="CUTINASE 1-RELATED"/>
    <property type="match status" value="1"/>
</dbReference>
<dbReference type="PANTHER" id="PTHR48250">
    <property type="entry name" value="CUTINASE 2-RELATED"/>
    <property type="match status" value="1"/>
</dbReference>
<dbReference type="Pfam" id="PF01083">
    <property type="entry name" value="Cutinase"/>
    <property type="match status" value="1"/>
</dbReference>
<dbReference type="PRINTS" id="PR00129">
    <property type="entry name" value="CUTINASE"/>
</dbReference>
<dbReference type="SMART" id="SM01110">
    <property type="entry name" value="Cutinase"/>
    <property type="match status" value="1"/>
</dbReference>
<dbReference type="SUPFAM" id="SSF53474">
    <property type="entry name" value="alpha/beta-Hydrolases"/>
    <property type="match status" value="1"/>
</dbReference>
<dbReference type="PROSITE" id="PS00155">
    <property type="entry name" value="CUTINASE_1"/>
    <property type="match status" value="1"/>
</dbReference>
<dbReference type="PROSITE" id="PS00931">
    <property type="entry name" value="CUTINASE_2"/>
    <property type="match status" value="1"/>
</dbReference>
<comment type="function">
    <text evidence="3 11">Catalyzes the hydrolysis of complex carboxylic polyesters found in the cell wall of plants (By similarity). Degrades cutin, a macromolecule that forms the structure of the plant cuticle (By similarity). Also degrades suberin, a specialized macromolecule found in the cell wall of various plant tissues (Probable).</text>
</comment>
<comment type="catalytic activity">
    <reaction evidence="5 6">
        <text>cutin + H2O = cutin monomers.</text>
        <dbReference type="EC" id="3.1.1.74"/>
    </reaction>
</comment>
<comment type="subcellular location">
    <subcellularLocation>
        <location evidence="7">Secreted</location>
    </subcellularLocation>
</comment>
<comment type="induction">
    <text evidence="7 8">Induced during growth on cutin, in a manner dependent on transcription factors FarA and FarB (PubMed:30863878). Induced during growth on suberin (PubMed:25043916). Induced during growth on the lipidic carbon sources 16-hydroxyhexadecanoic acid and propyl ricinoleate (synthetic cutin monomers), triacetin and triesterate (triglycerides), and olive oil (PubMed:30863878). Repressed during growth on glucose (PubMed:30863878).</text>
</comment>
<comment type="similarity">
    <text evidence="10">Belongs to the cutinase family.</text>
</comment>
<organism>
    <name type="scientific">Emericella nidulans (strain FGSC A4 / ATCC 38163 / CBS 112.46 / NRRL 194 / M139)</name>
    <name type="common">Aspergillus nidulans</name>
    <dbReference type="NCBI Taxonomy" id="227321"/>
    <lineage>
        <taxon>Eukaryota</taxon>
        <taxon>Fungi</taxon>
        <taxon>Dikarya</taxon>
        <taxon>Ascomycota</taxon>
        <taxon>Pezizomycotina</taxon>
        <taxon>Eurotiomycetes</taxon>
        <taxon>Eurotiomycetidae</taxon>
        <taxon>Eurotiales</taxon>
        <taxon>Aspergillaceae</taxon>
        <taxon>Aspergillus</taxon>
        <taxon>Aspergillus subgen. Nidulantes</taxon>
    </lineage>
</organism>
<reference key="1">
    <citation type="journal article" date="2005" name="Nature">
        <title>Sequencing of Aspergillus nidulans and comparative analysis with A. fumigatus and A. oryzae.</title>
        <authorList>
            <person name="Galagan J.E."/>
            <person name="Calvo S.E."/>
            <person name="Cuomo C."/>
            <person name="Ma L.-J."/>
            <person name="Wortman J.R."/>
            <person name="Batzoglou S."/>
            <person name="Lee S.-I."/>
            <person name="Bastuerkmen M."/>
            <person name="Spevak C.C."/>
            <person name="Clutterbuck J."/>
            <person name="Kapitonov V."/>
            <person name="Jurka J."/>
            <person name="Scazzocchio C."/>
            <person name="Farman M.L."/>
            <person name="Butler J."/>
            <person name="Purcell S."/>
            <person name="Harris S."/>
            <person name="Braus G.H."/>
            <person name="Draht O."/>
            <person name="Busch S."/>
            <person name="D'Enfert C."/>
            <person name="Bouchier C."/>
            <person name="Goldman G.H."/>
            <person name="Bell-Pedersen D."/>
            <person name="Griffiths-Jones S."/>
            <person name="Doonan J.H."/>
            <person name="Yu J."/>
            <person name="Vienken K."/>
            <person name="Pain A."/>
            <person name="Freitag M."/>
            <person name="Selker E.U."/>
            <person name="Archer D.B."/>
            <person name="Penalva M.A."/>
            <person name="Oakley B.R."/>
            <person name="Momany M."/>
            <person name="Tanaka T."/>
            <person name="Kumagai T."/>
            <person name="Asai K."/>
            <person name="Machida M."/>
            <person name="Nierman W.C."/>
            <person name="Denning D.W."/>
            <person name="Caddick M.X."/>
            <person name="Hynes M."/>
            <person name="Paoletti M."/>
            <person name="Fischer R."/>
            <person name="Miller B.L."/>
            <person name="Dyer P.S."/>
            <person name="Sachs M.S."/>
            <person name="Osmani S.A."/>
            <person name="Birren B.W."/>
        </authorList>
    </citation>
    <scope>NUCLEOTIDE SEQUENCE [LARGE SCALE GENOMIC DNA]</scope>
    <source>
        <strain>FGSC A4 / ATCC 38163 / CBS 112.46 / NRRL 194 / M139</strain>
    </source>
</reference>
<reference key="2">
    <citation type="journal article" date="2009" name="Fungal Genet. Biol.">
        <title>The 2008 update of the Aspergillus nidulans genome annotation: a community effort.</title>
        <authorList>
            <person name="Wortman J.R."/>
            <person name="Gilsenan J.M."/>
            <person name="Joardar V."/>
            <person name="Deegan J."/>
            <person name="Clutterbuck J."/>
            <person name="Andersen M.R."/>
            <person name="Archer D."/>
            <person name="Bencina M."/>
            <person name="Braus G."/>
            <person name="Coutinho P."/>
            <person name="von Dohren H."/>
            <person name="Doonan J."/>
            <person name="Driessen A.J."/>
            <person name="Durek P."/>
            <person name="Espeso E."/>
            <person name="Fekete E."/>
            <person name="Flipphi M."/>
            <person name="Estrada C.G."/>
            <person name="Geysens S."/>
            <person name="Goldman G."/>
            <person name="de Groot P.W."/>
            <person name="Hansen K."/>
            <person name="Harris S.D."/>
            <person name="Heinekamp T."/>
            <person name="Helmstaedt K."/>
            <person name="Henrissat B."/>
            <person name="Hofmann G."/>
            <person name="Homan T."/>
            <person name="Horio T."/>
            <person name="Horiuchi H."/>
            <person name="James S."/>
            <person name="Jones M."/>
            <person name="Karaffa L."/>
            <person name="Karanyi Z."/>
            <person name="Kato M."/>
            <person name="Keller N."/>
            <person name="Kelly D.E."/>
            <person name="Kiel J.A."/>
            <person name="Kim J.M."/>
            <person name="van der Klei I.J."/>
            <person name="Klis F.M."/>
            <person name="Kovalchuk A."/>
            <person name="Krasevec N."/>
            <person name="Kubicek C.P."/>
            <person name="Liu B."/>
            <person name="Maccabe A."/>
            <person name="Meyer V."/>
            <person name="Mirabito P."/>
            <person name="Miskei M."/>
            <person name="Mos M."/>
            <person name="Mullins J."/>
            <person name="Nelson D.R."/>
            <person name="Nielsen J."/>
            <person name="Oakley B.R."/>
            <person name="Osmani S.A."/>
            <person name="Pakula T."/>
            <person name="Paszewski A."/>
            <person name="Paulsen I."/>
            <person name="Pilsyk S."/>
            <person name="Pocsi I."/>
            <person name="Punt P.J."/>
            <person name="Ram A.F."/>
            <person name="Ren Q."/>
            <person name="Robellet X."/>
            <person name="Robson G."/>
            <person name="Seiboth B."/>
            <person name="van Solingen P."/>
            <person name="Specht T."/>
            <person name="Sun J."/>
            <person name="Taheri-Talesh N."/>
            <person name="Takeshita N."/>
            <person name="Ussery D."/>
            <person name="vanKuyk P.A."/>
            <person name="Visser H."/>
            <person name="van de Vondervoort P.J."/>
            <person name="de Vries R.P."/>
            <person name="Walton J."/>
            <person name="Xiang X."/>
            <person name="Xiong Y."/>
            <person name="Zeng A.P."/>
            <person name="Brandt B.W."/>
            <person name="Cornell M.J."/>
            <person name="van den Hondel C.A."/>
            <person name="Visser J."/>
            <person name="Oliver S.G."/>
            <person name="Turner G."/>
        </authorList>
    </citation>
    <scope>GENOME REANNOTATION</scope>
    <source>
        <strain>FGSC A4 / ATCC 38163 / CBS 112.46 / NRRL 194 / M139</strain>
    </source>
</reference>
<reference key="3">
    <citation type="journal article" date="2014" name="BMC Genomics">
        <title>Elucidating how the saprophytic fungus Aspergillus nidulans uses the plant polyester suberin as carbon source.</title>
        <authorList>
            <person name="Martins I."/>
            <person name="Hartmann D.O."/>
            <person name="Alves P.C."/>
            <person name="Martins C."/>
            <person name="Garcia H."/>
            <person name="Leclercq C.C."/>
            <person name="Ferreira R."/>
            <person name="He J."/>
            <person name="Renaut J."/>
            <person name="Becker J.D."/>
            <person name="Silva Pereira C."/>
        </authorList>
    </citation>
    <scope>FUNCTION</scope>
    <scope>SUBCELLULAR LOCATION</scope>
    <scope>INDUCTION</scope>
</reference>
<reference key="4">
    <citation type="journal article" date="2019" name="Appl. Microbiol. Biotechnol.">
        <title>Regulation of the cutinases expressed by Aspergillus nidulans and evaluation of their role in cutin degradation.</title>
        <authorList>
            <person name="Bermudez-Garcia E."/>
            <person name="Pena-Montes C."/>
            <person name="Martins I."/>
            <person name="Pais J."/>
            <person name="Pereira C.S."/>
            <person name="Sanchez S."/>
            <person name="Farres A."/>
        </authorList>
    </citation>
    <scope>INDUCTION</scope>
</reference>
<protein>
    <recommendedName>
        <fullName evidence="9">Cutinase 1</fullName>
        <ecNumber evidence="5 6">3.1.1.74</ecNumber>
    </recommendedName>
    <alternativeName>
        <fullName evidence="9">Ancut1</fullName>
    </alternativeName>
    <alternativeName>
        <fullName>Cutin hydrolase 1</fullName>
    </alternativeName>
</protein>
<evidence type="ECO:0000250" key="1">
    <source>
        <dbReference type="UniProtKB" id="P00590"/>
    </source>
</evidence>
<evidence type="ECO:0000250" key="2">
    <source>
        <dbReference type="UniProtKB" id="P52956"/>
    </source>
</evidence>
<evidence type="ECO:0000250" key="3">
    <source>
        <dbReference type="UniProtKB" id="Q5AVY9"/>
    </source>
</evidence>
<evidence type="ECO:0000255" key="4"/>
<evidence type="ECO:0000255" key="5">
    <source>
        <dbReference type="PROSITE-ProRule" id="PRU10108"/>
    </source>
</evidence>
<evidence type="ECO:0000255" key="6">
    <source>
        <dbReference type="PROSITE-ProRule" id="PRU10109"/>
    </source>
</evidence>
<evidence type="ECO:0000269" key="7">
    <source>
    </source>
</evidence>
<evidence type="ECO:0000269" key="8">
    <source>
    </source>
</evidence>
<evidence type="ECO:0000303" key="9">
    <source>
    </source>
</evidence>
<evidence type="ECO:0000305" key="10"/>
<evidence type="ECO:0000305" key="11">
    <source>
    </source>
</evidence>
<keyword id="KW-1015">Disulfide bond</keyword>
<keyword id="KW-0378">Hydrolase</keyword>
<keyword id="KW-1185">Reference proteome</keyword>
<keyword id="KW-0964">Secreted</keyword>
<keyword id="KW-0719">Serine esterase</keyword>
<keyword id="KW-0732">Signal</keyword>
<sequence>MKLQLHLALSLLAAIVAANPIRLDQRQITGNELRDGSCHDVTFIFARGSTELGYLGSTVGPATCNVLKLRKPGQVACQGVAPAYIADLASNFLPQGTNQIAINEAKSLFELAASKCPNTKIVAGGYSQGAAVMHAAISTLSSTVQDQIKGVVLFGDTRNKQDGGRIPNFPTDKTKIICAFGDLVCEGTLVITAAHLSYIDDVPDAADFLVGKL</sequence>
<name>CUTI1_EMENI</name>
<feature type="signal peptide" evidence="4">
    <location>
        <begin position="1"/>
        <end position="18"/>
    </location>
</feature>
<feature type="chain" id="PRO_0000395260" description="Cutinase 1">
    <location>
        <begin position="19"/>
        <end position="213"/>
    </location>
</feature>
<feature type="active site" description="Nucleophile" evidence="1">
    <location>
        <position position="127"/>
    </location>
</feature>
<feature type="active site" evidence="1">
    <location>
        <position position="182"/>
    </location>
</feature>
<feature type="active site" description="Proton donor/acceptor" evidence="1">
    <location>
        <position position="195"/>
    </location>
</feature>
<feature type="site" description="Transition state stabilizer" evidence="1">
    <location>
        <position position="49"/>
    </location>
</feature>
<feature type="site" description="Transition state stabilizer" evidence="1">
    <location>
        <position position="128"/>
    </location>
</feature>
<feature type="disulfide bond" evidence="2">
    <location>
        <begin position="38"/>
        <end position="116"/>
    </location>
</feature>
<feature type="disulfide bond" evidence="2">
    <location>
        <begin position="64"/>
        <end position="77"/>
    </location>
</feature>
<feature type="disulfide bond" evidence="2">
    <location>
        <begin position="178"/>
        <end position="185"/>
    </location>
</feature>
<accession>Q5B2C1</accession>
<accession>C8VGW9</accession>